<accession>A7NM86</accession>
<keyword id="KW-0963">Cytoplasm</keyword>
<keyword id="KW-0255">Endonuclease</keyword>
<keyword id="KW-0378">Hydrolase</keyword>
<keyword id="KW-0464">Manganese</keyword>
<keyword id="KW-0479">Metal-binding</keyword>
<keyword id="KW-0540">Nuclease</keyword>
<keyword id="KW-1185">Reference proteome</keyword>
<sequence length="224" mass="24195">MMKGSPPTVEEERALCAVGYRAIAGIDEAGRGCWAGPVVAAAVILPERVIAKPELLDGVADSKMLTPAQRVALFERITSLAVAWAVGSVPAHVIDSHGILPATRLAMQVALLRLPLPADVLLIDAVRLDGWPLPQRVLVKGDVRCLSIAAASIIAKVMRDRFMEGLGRYWTRYGFAAHKGYGTAAHQEALRRYGPTPHHRLTFRPLCDMAPANIRNAALEGEQP</sequence>
<organism>
    <name type="scientific">Roseiflexus castenholzii (strain DSM 13941 / HLO8)</name>
    <dbReference type="NCBI Taxonomy" id="383372"/>
    <lineage>
        <taxon>Bacteria</taxon>
        <taxon>Bacillati</taxon>
        <taxon>Chloroflexota</taxon>
        <taxon>Chloroflexia</taxon>
        <taxon>Chloroflexales</taxon>
        <taxon>Roseiflexineae</taxon>
        <taxon>Roseiflexaceae</taxon>
        <taxon>Roseiflexus</taxon>
    </lineage>
</organism>
<reference key="1">
    <citation type="submission" date="2007-08" db="EMBL/GenBank/DDBJ databases">
        <title>Complete sequence of Roseiflexus castenholzii DSM 13941.</title>
        <authorList>
            <consortium name="US DOE Joint Genome Institute"/>
            <person name="Copeland A."/>
            <person name="Lucas S."/>
            <person name="Lapidus A."/>
            <person name="Barry K."/>
            <person name="Glavina del Rio T."/>
            <person name="Dalin E."/>
            <person name="Tice H."/>
            <person name="Pitluck S."/>
            <person name="Thompson L.S."/>
            <person name="Brettin T."/>
            <person name="Bruce D."/>
            <person name="Detter J.C."/>
            <person name="Han C."/>
            <person name="Tapia R."/>
            <person name="Schmutz J."/>
            <person name="Larimer F."/>
            <person name="Land M."/>
            <person name="Hauser L."/>
            <person name="Kyrpides N."/>
            <person name="Mikhailova N."/>
            <person name="Bryant D.A."/>
            <person name="Hanada S."/>
            <person name="Tsukatani Y."/>
            <person name="Richardson P."/>
        </authorList>
    </citation>
    <scope>NUCLEOTIDE SEQUENCE [LARGE SCALE GENOMIC DNA]</scope>
    <source>
        <strain>DSM 13941 / HLO8</strain>
    </source>
</reference>
<comment type="function">
    <text evidence="1">Endonuclease that specifically degrades the RNA of RNA-DNA hybrids.</text>
</comment>
<comment type="catalytic activity">
    <reaction evidence="1">
        <text>Endonucleolytic cleavage to 5'-phosphomonoester.</text>
        <dbReference type="EC" id="3.1.26.4"/>
    </reaction>
</comment>
<comment type="cofactor">
    <cofactor evidence="1">
        <name>Mn(2+)</name>
        <dbReference type="ChEBI" id="CHEBI:29035"/>
    </cofactor>
    <cofactor evidence="1">
        <name>Mg(2+)</name>
        <dbReference type="ChEBI" id="CHEBI:18420"/>
    </cofactor>
    <text evidence="1">Manganese or magnesium. Binds 1 divalent metal ion per monomer in the absence of substrate. May bind a second metal ion after substrate binding.</text>
</comment>
<comment type="subcellular location">
    <subcellularLocation>
        <location evidence="1">Cytoplasm</location>
    </subcellularLocation>
</comment>
<comment type="similarity">
    <text evidence="1">Belongs to the RNase HII family.</text>
</comment>
<proteinExistence type="inferred from homology"/>
<evidence type="ECO:0000255" key="1">
    <source>
        <dbReference type="HAMAP-Rule" id="MF_00052"/>
    </source>
</evidence>
<evidence type="ECO:0000255" key="2">
    <source>
        <dbReference type="PROSITE-ProRule" id="PRU01319"/>
    </source>
</evidence>
<protein>
    <recommendedName>
        <fullName evidence="1">Ribonuclease HII</fullName>
        <shortName evidence="1">RNase HII</shortName>
        <ecNumber evidence="1">3.1.26.4</ecNumber>
    </recommendedName>
</protein>
<feature type="chain" id="PRO_1000074930" description="Ribonuclease HII">
    <location>
        <begin position="1"/>
        <end position="224"/>
    </location>
</feature>
<feature type="domain" description="RNase H type-2" evidence="2">
    <location>
        <begin position="21"/>
        <end position="223"/>
    </location>
</feature>
<feature type="binding site" evidence="1">
    <location>
        <position position="27"/>
    </location>
    <ligand>
        <name>a divalent metal cation</name>
        <dbReference type="ChEBI" id="CHEBI:60240"/>
    </ligand>
</feature>
<feature type="binding site" evidence="1">
    <location>
        <position position="28"/>
    </location>
    <ligand>
        <name>a divalent metal cation</name>
        <dbReference type="ChEBI" id="CHEBI:60240"/>
    </ligand>
</feature>
<feature type="binding site" evidence="1">
    <location>
        <position position="124"/>
    </location>
    <ligand>
        <name>a divalent metal cation</name>
        <dbReference type="ChEBI" id="CHEBI:60240"/>
    </ligand>
</feature>
<name>RNH2_ROSCS</name>
<gene>
    <name evidence="1" type="primary">rnhB</name>
    <name type="ordered locus">Rcas_2563</name>
</gene>
<dbReference type="EC" id="3.1.26.4" evidence="1"/>
<dbReference type="EMBL" id="CP000804">
    <property type="protein sequence ID" value="ABU58641.1"/>
    <property type="molecule type" value="Genomic_DNA"/>
</dbReference>
<dbReference type="RefSeq" id="WP_012121065.1">
    <property type="nucleotide sequence ID" value="NC_009767.1"/>
</dbReference>
<dbReference type="SMR" id="A7NM86"/>
<dbReference type="STRING" id="383372.Rcas_2563"/>
<dbReference type="KEGG" id="rca:Rcas_2563"/>
<dbReference type="eggNOG" id="COG0164">
    <property type="taxonomic scope" value="Bacteria"/>
</dbReference>
<dbReference type="HOGENOM" id="CLU_036532_3_2_0"/>
<dbReference type="OrthoDB" id="9803420at2"/>
<dbReference type="Proteomes" id="UP000000263">
    <property type="component" value="Chromosome"/>
</dbReference>
<dbReference type="GO" id="GO:0005737">
    <property type="term" value="C:cytoplasm"/>
    <property type="evidence" value="ECO:0007669"/>
    <property type="project" value="UniProtKB-SubCell"/>
</dbReference>
<dbReference type="GO" id="GO:0032299">
    <property type="term" value="C:ribonuclease H2 complex"/>
    <property type="evidence" value="ECO:0007669"/>
    <property type="project" value="TreeGrafter"/>
</dbReference>
<dbReference type="GO" id="GO:0030145">
    <property type="term" value="F:manganese ion binding"/>
    <property type="evidence" value="ECO:0007669"/>
    <property type="project" value="UniProtKB-UniRule"/>
</dbReference>
<dbReference type="GO" id="GO:0003723">
    <property type="term" value="F:RNA binding"/>
    <property type="evidence" value="ECO:0007669"/>
    <property type="project" value="InterPro"/>
</dbReference>
<dbReference type="GO" id="GO:0004523">
    <property type="term" value="F:RNA-DNA hybrid ribonuclease activity"/>
    <property type="evidence" value="ECO:0007669"/>
    <property type="project" value="UniProtKB-UniRule"/>
</dbReference>
<dbReference type="GO" id="GO:0043137">
    <property type="term" value="P:DNA replication, removal of RNA primer"/>
    <property type="evidence" value="ECO:0007669"/>
    <property type="project" value="TreeGrafter"/>
</dbReference>
<dbReference type="GO" id="GO:0006298">
    <property type="term" value="P:mismatch repair"/>
    <property type="evidence" value="ECO:0007669"/>
    <property type="project" value="TreeGrafter"/>
</dbReference>
<dbReference type="CDD" id="cd07182">
    <property type="entry name" value="RNase_HII_bacteria_HII_like"/>
    <property type="match status" value="1"/>
</dbReference>
<dbReference type="Gene3D" id="3.30.420.10">
    <property type="entry name" value="Ribonuclease H-like superfamily/Ribonuclease H"/>
    <property type="match status" value="1"/>
</dbReference>
<dbReference type="HAMAP" id="MF_00052_B">
    <property type="entry name" value="RNase_HII_B"/>
    <property type="match status" value="1"/>
</dbReference>
<dbReference type="InterPro" id="IPR022898">
    <property type="entry name" value="RNase_HII"/>
</dbReference>
<dbReference type="InterPro" id="IPR001352">
    <property type="entry name" value="RNase_HII/HIII"/>
</dbReference>
<dbReference type="InterPro" id="IPR024567">
    <property type="entry name" value="RNase_HII/HIII_dom"/>
</dbReference>
<dbReference type="InterPro" id="IPR012337">
    <property type="entry name" value="RNaseH-like_sf"/>
</dbReference>
<dbReference type="InterPro" id="IPR036397">
    <property type="entry name" value="RNaseH_sf"/>
</dbReference>
<dbReference type="NCBIfam" id="NF000595">
    <property type="entry name" value="PRK00015.1-3"/>
    <property type="match status" value="1"/>
</dbReference>
<dbReference type="PANTHER" id="PTHR10954">
    <property type="entry name" value="RIBONUCLEASE H2 SUBUNIT A"/>
    <property type="match status" value="1"/>
</dbReference>
<dbReference type="PANTHER" id="PTHR10954:SF18">
    <property type="entry name" value="RIBONUCLEASE HII"/>
    <property type="match status" value="1"/>
</dbReference>
<dbReference type="Pfam" id="PF01351">
    <property type="entry name" value="RNase_HII"/>
    <property type="match status" value="1"/>
</dbReference>
<dbReference type="SUPFAM" id="SSF53098">
    <property type="entry name" value="Ribonuclease H-like"/>
    <property type="match status" value="1"/>
</dbReference>
<dbReference type="PROSITE" id="PS51975">
    <property type="entry name" value="RNASE_H_2"/>
    <property type="match status" value="1"/>
</dbReference>